<evidence type="ECO:0000250" key="1">
    <source>
        <dbReference type="UniProtKB" id="A0A0C4DGP1"/>
    </source>
</evidence>
<evidence type="ECO:0000269" key="2">
    <source>
    </source>
</evidence>
<evidence type="ECO:0000303" key="3">
    <source>
    </source>
</evidence>
<evidence type="ECO:0000305" key="4"/>
<evidence type="ECO:0000312" key="5">
    <source>
        <dbReference type="EMBL" id="AAH85297.1"/>
    </source>
</evidence>
<evidence type="ECO:0000312" key="6">
    <source>
        <dbReference type="EMBL" id="AAI00441.1"/>
    </source>
</evidence>
<evidence type="ECO:0000312" key="7">
    <source>
        <dbReference type="EMBL" id="BAH02664.1"/>
    </source>
</evidence>
<evidence type="ECO:0000312" key="8">
    <source>
        <dbReference type="Proteomes" id="UP000000589"/>
    </source>
</evidence>
<organism evidence="5">
    <name type="scientific">Mus musculus</name>
    <name type="common">Mouse</name>
    <dbReference type="NCBI Taxonomy" id="10090"/>
    <lineage>
        <taxon>Eukaryota</taxon>
        <taxon>Metazoa</taxon>
        <taxon>Chordata</taxon>
        <taxon>Craniata</taxon>
        <taxon>Vertebrata</taxon>
        <taxon>Euteleostomi</taxon>
        <taxon>Mammalia</taxon>
        <taxon>Eutheria</taxon>
        <taxon>Euarchontoglires</taxon>
        <taxon>Glires</taxon>
        <taxon>Rodentia</taxon>
        <taxon>Myomorpha</taxon>
        <taxon>Muroidea</taxon>
        <taxon>Muridae</taxon>
        <taxon>Murinae</taxon>
        <taxon>Mus</taxon>
        <taxon>Mus</taxon>
    </lineage>
</organism>
<name>SGSN1_MOUSE</name>
<comment type="tissue specificity">
    <text evidence="2">Expressed specifically in salivary glands (at protein level).</text>
</comment>
<comment type="caution">
    <text evidence="4">Originally described as a splice variant of the Fam220a gene but is considered to be a separate gene to Fam220a in genome annotation databases such as Ensembl and RefSeq.</text>
</comment>
<feature type="chain" id="PRO_0000460438" description="Small integral membrane protein 10-like protein 3">
    <location>
        <begin position="1"/>
        <end position="68"/>
    </location>
</feature>
<gene>
    <name evidence="1" type="primary">Smim10l3</name>
    <name evidence="3" type="synonym">Sagsin1</name>
</gene>
<sequence length="68" mass="7757">MATALSGLAVRLSRSAAARSYGVFCKGLTRTLLIFFDLAWRLRINFPYLYIVASMMLNVRLQVHIEIH</sequence>
<accession>Q5U425</accession>
<reference evidence="7" key="1">
    <citation type="journal article" date="2009" name="Int. J. Urol.">
        <title>Unique alternative translation from two open reading frames on Acpin1 mRNA yields an acrosomal protein and a salivary-gland-specific protein.</title>
        <authorList>
            <person name="Ueda T."/>
            <person name="Manabe H."/>
            <person name="Tokuhiro K."/>
            <person name="Hirose M."/>
            <person name="Matsuoka Y."/>
            <person name="Miyagawa Y."/>
            <person name="Tsujimura A."/>
            <person name="Fujita K."/>
            <person name="Wada M."/>
            <person name="Okuyama A."/>
            <person name="Nishimune Y."/>
            <person name="Tanaka H."/>
        </authorList>
    </citation>
    <scope>NUCLEOTIDE SEQUENCE [MRNA]</scope>
    <scope>TISSUE SPECIFICITY</scope>
    <source>
        <tissue evidence="7">Testis</tissue>
    </source>
</reference>
<reference evidence="8" key="2">
    <citation type="journal article" date="2009" name="PLoS Biol.">
        <title>Lineage-specific biology revealed by a finished genome assembly of the mouse.</title>
        <authorList>
            <person name="Church D.M."/>
            <person name="Goodstadt L."/>
            <person name="Hillier L.W."/>
            <person name="Zody M.C."/>
            <person name="Goldstein S."/>
            <person name="She X."/>
            <person name="Bult C.J."/>
            <person name="Agarwala R."/>
            <person name="Cherry J.L."/>
            <person name="DiCuccio M."/>
            <person name="Hlavina W."/>
            <person name="Kapustin Y."/>
            <person name="Meric P."/>
            <person name="Maglott D."/>
            <person name="Birtle Z."/>
            <person name="Marques A.C."/>
            <person name="Graves T."/>
            <person name="Zhou S."/>
            <person name="Teague B."/>
            <person name="Potamousis K."/>
            <person name="Churas C."/>
            <person name="Place M."/>
            <person name="Herschleb J."/>
            <person name="Runnheim R."/>
            <person name="Forrest D."/>
            <person name="Amos-Landgraf J."/>
            <person name="Schwartz D.C."/>
            <person name="Cheng Z."/>
            <person name="Lindblad-Toh K."/>
            <person name="Eichler E.E."/>
            <person name="Ponting C.P."/>
        </authorList>
    </citation>
    <scope>NUCLEOTIDE SEQUENCE [LARGE SCALE GENOMIC DNA]</scope>
    <source>
        <strain evidence="8">C57BL/6J</strain>
    </source>
</reference>
<reference evidence="5 6" key="3">
    <citation type="journal article" date="2004" name="Genome Res.">
        <title>The status, quality, and expansion of the NIH full-length cDNA project: the Mammalian Gene Collection (MGC).</title>
        <authorList>
            <consortium name="The MGC Project Team"/>
        </authorList>
    </citation>
    <scope>NUCLEOTIDE SEQUENCE [LARGE SCALE MRNA]</scope>
    <source>
        <tissue evidence="5">Olfactory epithelium</tissue>
        <tissue evidence="6">Testis</tissue>
    </source>
</reference>
<proteinExistence type="evidence at protein level"/>
<dbReference type="EMBL" id="AB374429">
    <property type="protein sequence ID" value="BAH02664.1"/>
    <property type="molecule type" value="mRNA"/>
</dbReference>
<dbReference type="EMBL" id="BC085297">
    <property type="protein sequence ID" value="AAH85297.1"/>
    <property type="molecule type" value="mRNA"/>
</dbReference>
<dbReference type="EMBL" id="BC100440">
    <property type="protein sequence ID" value="AAI00441.1"/>
    <property type="molecule type" value="mRNA"/>
</dbReference>
<dbReference type="RefSeq" id="NP_001382923.1">
    <property type="nucleotide sequence ID" value="NM_001395994.1"/>
</dbReference>
<dbReference type="ProteomicsDB" id="332951"/>
<dbReference type="DNASU" id="67238"/>
<dbReference type="Ensembl" id="ENSMUST00000119488.2">
    <property type="protein sequence ID" value="ENSMUSP00000114024.2"/>
    <property type="gene ID" value="ENSMUSG00000118332.3"/>
</dbReference>
<dbReference type="GeneID" id="122526778"/>
<dbReference type="KEGG" id="mmu:67238"/>
<dbReference type="CTD" id="84792"/>
<dbReference type="VEuPathDB" id="HostDB:ENSMUSG00000118332"/>
<dbReference type="GeneTree" id="ENSGT00390000014547"/>
<dbReference type="HOGENOM" id="CLU_186454_1_0_1"/>
<dbReference type="OMA" id="AWRLRIK"/>
<dbReference type="OrthoDB" id="9619930at2759"/>
<dbReference type="TreeFam" id="TF336091"/>
<dbReference type="BioGRID-ORCS" id="67238">
    <property type="hits" value="2 hits in 28 CRISPR screens"/>
</dbReference>
<dbReference type="ChiTaRS" id="Fam220a">
    <property type="organism name" value="mouse"/>
</dbReference>
<dbReference type="Proteomes" id="UP000000589">
    <property type="component" value="Chromosome 5"/>
</dbReference>
<dbReference type="Bgee" id="ENSMUSG00000118332">
    <property type="expression patterns" value="Expressed in animal zygote and 67 other cell types or tissues"/>
</dbReference>
<dbReference type="InterPro" id="IPR029367">
    <property type="entry name" value="SMIM10"/>
</dbReference>
<dbReference type="PANTHER" id="PTHR34446:SF1">
    <property type="entry name" value="SALIVARY GLAND SPECIFIC PROTEIN SAGSIN1"/>
    <property type="match status" value="1"/>
</dbReference>
<dbReference type="PANTHER" id="PTHR34446">
    <property type="entry name" value="SMALL INTEGRAL MEMBRANE PROTEIN 10"/>
    <property type="match status" value="1"/>
</dbReference>
<dbReference type="Pfam" id="PF15118">
    <property type="entry name" value="DUF4560"/>
    <property type="match status" value="1"/>
</dbReference>
<protein>
    <recommendedName>
        <fullName evidence="1">Small integral membrane protein 10-like protein 3</fullName>
    </recommendedName>
    <alternativeName>
        <fullName evidence="3">Salivary gland-specific protein SAGSIN1</fullName>
    </alternativeName>
</protein>
<keyword id="KW-1185">Reference proteome</keyword>